<comment type="function">
    <text evidence="1">Catalyzes the NADPH-dependent rearrangement and reduction of 1-deoxy-D-xylulose-5-phosphate (DXP) to 2-C-methyl-D-erythritol 4-phosphate (MEP).</text>
</comment>
<comment type="catalytic activity">
    <reaction evidence="1">
        <text>2-C-methyl-D-erythritol 4-phosphate + NADP(+) = 1-deoxy-D-xylulose 5-phosphate + NADPH + H(+)</text>
        <dbReference type="Rhea" id="RHEA:13717"/>
        <dbReference type="ChEBI" id="CHEBI:15378"/>
        <dbReference type="ChEBI" id="CHEBI:57783"/>
        <dbReference type="ChEBI" id="CHEBI:57792"/>
        <dbReference type="ChEBI" id="CHEBI:58262"/>
        <dbReference type="ChEBI" id="CHEBI:58349"/>
        <dbReference type="EC" id="1.1.1.267"/>
    </reaction>
    <physiologicalReaction direction="right-to-left" evidence="1">
        <dbReference type="Rhea" id="RHEA:13719"/>
    </physiologicalReaction>
</comment>
<comment type="cofactor">
    <cofactor evidence="1">
        <name>Mg(2+)</name>
        <dbReference type="ChEBI" id="CHEBI:18420"/>
    </cofactor>
    <cofactor evidence="1">
        <name>Mn(2+)</name>
        <dbReference type="ChEBI" id="CHEBI:29035"/>
    </cofactor>
</comment>
<comment type="pathway">
    <text evidence="1">Isoprenoid biosynthesis; isopentenyl diphosphate biosynthesis via DXP pathway; isopentenyl diphosphate from 1-deoxy-D-xylulose 5-phosphate: step 1/6.</text>
</comment>
<comment type="similarity">
    <text evidence="1">Belongs to the DXR family.</text>
</comment>
<keyword id="KW-0414">Isoprene biosynthesis</keyword>
<keyword id="KW-0464">Manganese</keyword>
<keyword id="KW-0479">Metal-binding</keyword>
<keyword id="KW-0521">NADP</keyword>
<keyword id="KW-0560">Oxidoreductase</keyword>
<evidence type="ECO:0000255" key="1">
    <source>
        <dbReference type="HAMAP-Rule" id="MF_00183"/>
    </source>
</evidence>
<name>DXR_HELPS</name>
<gene>
    <name evidence="1" type="primary">dxr</name>
    <name type="ordered locus">HPSH_01115</name>
</gene>
<dbReference type="EC" id="1.1.1.267" evidence="1"/>
<dbReference type="EMBL" id="CP001072">
    <property type="protein sequence ID" value="ACD47677.1"/>
    <property type="molecule type" value="Genomic_DNA"/>
</dbReference>
<dbReference type="RefSeq" id="WP_000260820.1">
    <property type="nucleotide sequence ID" value="NC_010698.2"/>
</dbReference>
<dbReference type="SMR" id="B2US45"/>
<dbReference type="KEGG" id="hps:HPSH_01115"/>
<dbReference type="HOGENOM" id="CLU_035714_4_0_7"/>
<dbReference type="UniPathway" id="UPA00056">
    <property type="reaction ID" value="UER00092"/>
</dbReference>
<dbReference type="GO" id="GO:0030604">
    <property type="term" value="F:1-deoxy-D-xylulose-5-phosphate reductoisomerase activity"/>
    <property type="evidence" value="ECO:0007669"/>
    <property type="project" value="UniProtKB-UniRule"/>
</dbReference>
<dbReference type="GO" id="GO:0030145">
    <property type="term" value="F:manganese ion binding"/>
    <property type="evidence" value="ECO:0007669"/>
    <property type="project" value="TreeGrafter"/>
</dbReference>
<dbReference type="GO" id="GO:0070402">
    <property type="term" value="F:NADPH binding"/>
    <property type="evidence" value="ECO:0007669"/>
    <property type="project" value="InterPro"/>
</dbReference>
<dbReference type="GO" id="GO:0051484">
    <property type="term" value="P:isopentenyl diphosphate biosynthetic process, methylerythritol 4-phosphate pathway involved in terpenoid biosynthetic process"/>
    <property type="evidence" value="ECO:0007669"/>
    <property type="project" value="TreeGrafter"/>
</dbReference>
<dbReference type="Gene3D" id="1.10.1740.10">
    <property type="match status" value="1"/>
</dbReference>
<dbReference type="Gene3D" id="3.40.50.720">
    <property type="entry name" value="NAD(P)-binding Rossmann-like Domain"/>
    <property type="match status" value="1"/>
</dbReference>
<dbReference type="HAMAP" id="MF_00183">
    <property type="entry name" value="DXP_reductoisom"/>
    <property type="match status" value="1"/>
</dbReference>
<dbReference type="InterPro" id="IPR003821">
    <property type="entry name" value="DXP_reductoisomerase"/>
</dbReference>
<dbReference type="InterPro" id="IPR013644">
    <property type="entry name" value="DXP_reductoisomerase_C"/>
</dbReference>
<dbReference type="InterPro" id="IPR013512">
    <property type="entry name" value="DXP_reductoisomerase_N"/>
</dbReference>
<dbReference type="InterPro" id="IPR026877">
    <property type="entry name" value="DXPR_C"/>
</dbReference>
<dbReference type="InterPro" id="IPR036169">
    <property type="entry name" value="DXPR_C_sf"/>
</dbReference>
<dbReference type="InterPro" id="IPR036291">
    <property type="entry name" value="NAD(P)-bd_dom_sf"/>
</dbReference>
<dbReference type="NCBIfam" id="TIGR00243">
    <property type="entry name" value="Dxr"/>
    <property type="match status" value="1"/>
</dbReference>
<dbReference type="PANTHER" id="PTHR30525">
    <property type="entry name" value="1-DEOXY-D-XYLULOSE 5-PHOSPHATE REDUCTOISOMERASE"/>
    <property type="match status" value="1"/>
</dbReference>
<dbReference type="PANTHER" id="PTHR30525:SF0">
    <property type="entry name" value="1-DEOXY-D-XYLULOSE 5-PHOSPHATE REDUCTOISOMERASE, CHLOROPLASTIC"/>
    <property type="match status" value="1"/>
</dbReference>
<dbReference type="Pfam" id="PF08436">
    <property type="entry name" value="DXP_redisom_C"/>
    <property type="match status" value="1"/>
</dbReference>
<dbReference type="Pfam" id="PF02670">
    <property type="entry name" value="DXP_reductoisom"/>
    <property type="match status" value="1"/>
</dbReference>
<dbReference type="Pfam" id="PF13288">
    <property type="entry name" value="DXPR_C"/>
    <property type="match status" value="1"/>
</dbReference>
<dbReference type="PIRSF" id="PIRSF006205">
    <property type="entry name" value="Dxp_reductismrs"/>
    <property type="match status" value="1"/>
</dbReference>
<dbReference type="SUPFAM" id="SSF69055">
    <property type="entry name" value="1-deoxy-D-xylulose-5-phosphate reductoisomerase, C-terminal domain"/>
    <property type="match status" value="1"/>
</dbReference>
<dbReference type="SUPFAM" id="SSF55347">
    <property type="entry name" value="Glyceraldehyde-3-phosphate dehydrogenase-like, C-terminal domain"/>
    <property type="match status" value="1"/>
</dbReference>
<dbReference type="SUPFAM" id="SSF51735">
    <property type="entry name" value="NAD(P)-binding Rossmann-fold domains"/>
    <property type="match status" value="1"/>
</dbReference>
<accession>B2US45</accession>
<feature type="chain" id="PRO_1000098502" description="1-deoxy-D-xylulose 5-phosphate reductoisomerase">
    <location>
        <begin position="1"/>
        <end position="368"/>
    </location>
</feature>
<feature type="binding site" evidence="1">
    <location>
        <position position="7"/>
    </location>
    <ligand>
        <name>NADPH</name>
        <dbReference type="ChEBI" id="CHEBI:57783"/>
    </ligand>
</feature>
<feature type="binding site" evidence="1">
    <location>
        <position position="8"/>
    </location>
    <ligand>
        <name>NADPH</name>
        <dbReference type="ChEBI" id="CHEBI:57783"/>
    </ligand>
</feature>
<feature type="binding site" evidence="1">
    <location>
        <position position="9"/>
    </location>
    <ligand>
        <name>NADPH</name>
        <dbReference type="ChEBI" id="CHEBI:57783"/>
    </ligand>
</feature>
<feature type="binding site" evidence="1">
    <location>
        <position position="10"/>
    </location>
    <ligand>
        <name>NADPH</name>
        <dbReference type="ChEBI" id="CHEBI:57783"/>
    </ligand>
</feature>
<feature type="binding site" evidence="1">
    <location>
        <position position="31"/>
    </location>
    <ligand>
        <name>NADPH</name>
        <dbReference type="ChEBI" id="CHEBI:57783"/>
    </ligand>
</feature>
<feature type="binding site" evidence="1">
    <location>
        <position position="32"/>
    </location>
    <ligand>
        <name>NADPH</name>
        <dbReference type="ChEBI" id="CHEBI:57783"/>
    </ligand>
</feature>
<feature type="binding site" evidence="1">
    <location>
        <position position="33"/>
    </location>
    <ligand>
        <name>NADPH</name>
        <dbReference type="ChEBI" id="CHEBI:57783"/>
    </ligand>
</feature>
<feature type="binding site" evidence="1">
    <location>
        <position position="113"/>
    </location>
    <ligand>
        <name>NADPH</name>
        <dbReference type="ChEBI" id="CHEBI:57783"/>
    </ligand>
</feature>
<feature type="binding site" evidence="1">
    <location>
        <position position="114"/>
    </location>
    <ligand>
        <name>1-deoxy-D-xylulose 5-phosphate</name>
        <dbReference type="ChEBI" id="CHEBI:57792"/>
    </ligand>
</feature>
<feature type="binding site" evidence="1">
    <location>
        <position position="115"/>
    </location>
    <ligand>
        <name>NADPH</name>
        <dbReference type="ChEBI" id="CHEBI:57783"/>
    </ligand>
</feature>
<feature type="binding site" evidence="1">
    <location>
        <position position="133"/>
    </location>
    <ligand>
        <name>Mn(2+)</name>
        <dbReference type="ChEBI" id="CHEBI:29035"/>
    </ligand>
</feature>
<feature type="binding site" evidence="1">
    <location>
        <position position="134"/>
    </location>
    <ligand>
        <name>1-deoxy-D-xylulose 5-phosphate</name>
        <dbReference type="ChEBI" id="CHEBI:57792"/>
    </ligand>
</feature>
<feature type="binding site" evidence="1">
    <location>
        <position position="135"/>
    </location>
    <ligand>
        <name>1-deoxy-D-xylulose 5-phosphate</name>
        <dbReference type="ChEBI" id="CHEBI:57792"/>
    </ligand>
</feature>
<feature type="binding site" evidence="1">
    <location>
        <position position="135"/>
    </location>
    <ligand>
        <name>Mn(2+)</name>
        <dbReference type="ChEBI" id="CHEBI:29035"/>
    </ligand>
</feature>
<feature type="binding site" evidence="1">
    <location>
        <position position="158"/>
    </location>
    <ligand>
        <name>1-deoxy-D-xylulose 5-phosphate</name>
        <dbReference type="ChEBI" id="CHEBI:57792"/>
    </ligand>
</feature>
<feature type="binding site" evidence="1">
    <location>
        <position position="181"/>
    </location>
    <ligand>
        <name>1-deoxy-D-xylulose 5-phosphate</name>
        <dbReference type="ChEBI" id="CHEBI:57792"/>
    </ligand>
</feature>
<feature type="binding site" evidence="1">
    <location>
        <position position="187"/>
    </location>
    <ligand>
        <name>NADPH</name>
        <dbReference type="ChEBI" id="CHEBI:57783"/>
    </ligand>
</feature>
<feature type="binding site" evidence="1">
    <location>
        <position position="194"/>
    </location>
    <ligand>
        <name>1-deoxy-D-xylulose 5-phosphate</name>
        <dbReference type="ChEBI" id="CHEBI:57792"/>
    </ligand>
</feature>
<feature type="binding site" evidence="1">
    <location>
        <position position="199"/>
    </location>
    <ligand>
        <name>1-deoxy-D-xylulose 5-phosphate</name>
        <dbReference type="ChEBI" id="CHEBI:57792"/>
    </ligand>
</feature>
<feature type="binding site" evidence="1">
    <location>
        <position position="200"/>
    </location>
    <ligand>
        <name>1-deoxy-D-xylulose 5-phosphate</name>
        <dbReference type="ChEBI" id="CHEBI:57792"/>
    </ligand>
</feature>
<feature type="binding site" evidence="1">
    <location>
        <position position="203"/>
    </location>
    <ligand>
        <name>1-deoxy-D-xylulose 5-phosphate</name>
        <dbReference type="ChEBI" id="CHEBI:57792"/>
    </ligand>
</feature>
<feature type="binding site" evidence="1">
    <location>
        <position position="203"/>
    </location>
    <ligand>
        <name>Mn(2+)</name>
        <dbReference type="ChEBI" id="CHEBI:29035"/>
    </ligand>
</feature>
<protein>
    <recommendedName>
        <fullName evidence="1">1-deoxy-D-xylulose 5-phosphate reductoisomerase</fullName>
        <shortName evidence="1">DXP reductoisomerase</shortName>
        <ecNumber evidence="1">1.1.1.267</ecNumber>
    </recommendedName>
    <alternativeName>
        <fullName evidence="1">1-deoxyxylulose-5-phosphate reductoisomerase</fullName>
    </alternativeName>
    <alternativeName>
        <fullName evidence="1">2-C-methyl-D-erythritol 4-phosphate synthase</fullName>
    </alternativeName>
</protein>
<sequence length="368" mass="40084">MVVLGSTGSIGKNALKIAKKFKVGIEALSCGKNIALINEQIKVFKPKKVAILDSNDLNGLEPLGAKVFVGLEGIDAMIEECVSNLVINAIVGVAGLRASFKSLQTNKKLALANKESLVSAGHLLDISQITPIDSEHFGLWALLQNKALKPKSLIISASGGAFRDTPLELIPIQNAQNALKHPNWSMGSKITIDSASMVNKLFEILETYWLFGASLKIDALIERSSIVHALVEFEDNSIIAHLASADMQLPISYAINPKLASLSASIKPLDLYALSAIKFEPISMERYTLWRYKDLLLENPKLGVVLNASNEVAMEKFLNQEIAFGGLIKTISQALESYAKTPFKLSDLDEVLALDREVRERFGSVARV</sequence>
<reference key="1">
    <citation type="submission" date="2008-05" db="EMBL/GenBank/DDBJ databases">
        <title>Genome sequence of Helicobacter pylori from the remote Amazon: traces of Asian ancestry of the first Americans.</title>
        <authorList>
            <person name="Kersulyte D."/>
            <person name="Kalia A."/>
            <person name="Gilman R.H."/>
            <person name="Berg D.E."/>
        </authorList>
    </citation>
    <scope>NUCLEOTIDE SEQUENCE [LARGE SCALE GENOMIC DNA]</scope>
    <source>
        <strain>Shi470</strain>
    </source>
</reference>
<organism>
    <name type="scientific">Helicobacter pylori (strain Shi470)</name>
    <dbReference type="NCBI Taxonomy" id="512562"/>
    <lineage>
        <taxon>Bacteria</taxon>
        <taxon>Pseudomonadati</taxon>
        <taxon>Campylobacterota</taxon>
        <taxon>Epsilonproteobacteria</taxon>
        <taxon>Campylobacterales</taxon>
        <taxon>Helicobacteraceae</taxon>
        <taxon>Helicobacter</taxon>
    </lineage>
</organism>
<proteinExistence type="inferred from homology"/>